<reference key="1">
    <citation type="journal article" date="2000" name="Nature">
        <title>Complete genome sequence of Pseudomonas aeruginosa PAO1, an opportunistic pathogen.</title>
        <authorList>
            <person name="Stover C.K."/>
            <person name="Pham X.-Q.T."/>
            <person name="Erwin A.L."/>
            <person name="Mizoguchi S.D."/>
            <person name="Warrener P."/>
            <person name="Hickey M.J."/>
            <person name="Brinkman F.S.L."/>
            <person name="Hufnagle W.O."/>
            <person name="Kowalik D.J."/>
            <person name="Lagrou M."/>
            <person name="Garber R.L."/>
            <person name="Goltry L."/>
            <person name="Tolentino E."/>
            <person name="Westbrock-Wadman S."/>
            <person name="Yuan Y."/>
            <person name="Brody L.L."/>
            <person name="Coulter S.N."/>
            <person name="Folger K.R."/>
            <person name="Kas A."/>
            <person name="Larbig K."/>
            <person name="Lim R.M."/>
            <person name="Smith K.A."/>
            <person name="Spencer D.H."/>
            <person name="Wong G.K.-S."/>
            <person name="Wu Z."/>
            <person name="Paulsen I.T."/>
            <person name="Reizer J."/>
            <person name="Saier M.H. Jr."/>
            <person name="Hancock R.E.W."/>
            <person name="Lory S."/>
            <person name="Olson M.V."/>
        </authorList>
    </citation>
    <scope>NUCLEOTIDE SEQUENCE [LARGE SCALE GENOMIC DNA]</scope>
    <source>
        <strain>ATCC 15692 / DSM 22644 / CIP 104116 / JCM 14847 / LMG 12228 / 1C / PRS 101 / PAO1</strain>
    </source>
</reference>
<reference key="2">
    <citation type="journal article" date="2019" name="Front. Microbiol.">
        <title>Delivery of the Pseudomonas aeruginosa Phospholipase Effectors PldA and PldB in a VgrG- and H2-T6SS-Dependent Manner.</title>
        <authorList>
            <person name="Wettstadt S."/>
            <person name="Wood T.E."/>
            <person name="Fecht S."/>
            <person name="Filloux A."/>
        </authorList>
    </citation>
    <scope>FUNCTION</scope>
    <scope>DISRUPTION PHENOTYPE</scope>
    <scope>SUBCELLULAR LOCATION</scope>
    <source>
        <strain>ATCC 15692 / DSM 22644 / CIP 104116 / JCM 14847 / LMG 12228 / 1C / PRS 101 / PAO1</strain>
    </source>
</reference>
<evidence type="ECO:0000269" key="1">
    <source>
    </source>
</evidence>
<evidence type="ECO:0000303" key="2">
    <source>
    </source>
</evidence>
<evidence type="ECO:0000305" key="3"/>
<dbReference type="EMBL" id="AE004091">
    <property type="protein sequence ID" value="AAG06874.1"/>
    <property type="molecule type" value="Genomic_DNA"/>
</dbReference>
<dbReference type="PIR" id="G83210">
    <property type="entry name" value="G83210"/>
</dbReference>
<dbReference type="RefSeq" id="NP_252176.1">
    <property type="nucleotide sequence ID" value="NC_002516.2"/>
</dbReference>
<dbReference type="SMR" id="Q9HYC3"/>
<dbReference type="STRING" id="208964.PA3486"/>
<dbReference type="PaxDb" id="208964-PA3486"/>
<dbReference type="GeneID" id="879939"/>
<dbReference type="KEGG" id="pae:PA3486"/>
<dbReference type="PATRIC" id="fig|208964.12.peg.3650"/>
<dbReference type="PseudoCAP" id="PA3486"/>
<dbReference type="HOGENOM" id="CLU_004121_7_0_6"/>
<dbReference type="InParanoid" id="Q9HYC3"/>
<dbReference type="OrthoDB" id="9762420at2"/>
<dbReference type="PhylomeDB" id="Q9HYC3"/>
<dbReference type="BioCyc" id="PAER208964:G1FZ6-3554-MONOMER"/>
<dbReference type="Proteomes" id="UP000002438">
    <property type="component" value="Chromosome"/>
</dbReference>
<dbReference type="GO" id="GO:0005576">
    <property type="term" value="C:extracellular region"/>
    <property type="evidence" value="ECO:0007669"/>
    <property type="project" value="UniProtKB-SubCell"/>
</dbReference>
<dbReference type="GO" id="GO:0033104">
    <property type="term" value="C:type VI protein secretion system complex"/>
    <property type="evidence" value="ECO:0000318"/>
    <property type="project" value="GO_Central"/>
</dbReference>
<dbReference type="GO" id="GO:0033103">
    <property type="term" value="P:protein secretion by the type VI secretion system"/>
    <property type="evidence" value="ECO:0000318"/>
    <property type="project" value="GO_Central"/>
</dbReference>
<dbReference type="FunFam" id="3.55.50.10:FF:000001">
    <property type="entry name" value="Actin cross-linking toxin VgrG1"/>
    <property type="match status" value="1"/>
</dbReference>
<dbReference type="Gene3D" id="2.30.110.50">
    <property type="match status" value="1"/>
</dbReference>
<dbReference type="Gene3D" id="4.10.220.110">
    <property type="match status" value="1"/>
</dbReference>
<dbReference type="Gene3D" id="3.55.50.10">
    <property type="entry name" value="Baseplate protein-like domains"/>
    <property type="match status" value="1"/>
</dbReference>
<dbReference type="Gene3D" id="2.40.50.230">
    <property type="entry name" value="Gp5 N-terminal domain"/>
    <property type="match status" value="1"/>
</dbReference>
<dbReference type="InterPro" id="IPR006531">
    <property type="entry name" value="Gp5/Vgr_OB"/>
</dbReference>
<dbReference type="InterPro" id="IPR054030">
    <property type="entry name" value="Gp5_Vgr_C"/>
</dbReference>
<dbReference type="InterPro" id="IPR017847">
    <property type="entry name" value="T6SS_RhsGE_Vgr_subset"/>
</dbReference>
<dbReference type="InterPro" id="IPR006533">
    <property type="entry name" value="T6SS_Vgr_RhsGE"/>
</dbReference>
<dbReference type="InterPro" id="IPR050708">
    <property type="entry name" value="T6SS_VgrG/RHS"/>
</dbReference>
<dbReference type="InterPro" id="IPR037026">
    <property type="entry name" value="Vgr_OB-fold_dom_sf"/>
</dbReference>
<dbReference type="NCBIfam" id="TIGR01646">
    <property type="entry name" value="vgr_GE"/>
    <property type="match status" value="1"/>
</dbReference>
<dbReference type="NCBIfam" id="TIGR03361">
    <property type="entry name" value="VI_Rhs_Vgr"/>
    <property type="match status" value="1"/>
</dbReference>
<dbReference type="PANTHER" id="PTHR32305">
    <property type="match status" value="1"/>
</dbReference>
<dbReference type="PANTHER" id="PTHR32305:SF15">
    <property type="entry name" value="PROTEIN RHSA-RELATED"/>
    <property type="match status" value="1"/>
</dbReference>
<dbReference type="Pfam" id="PF22178">
    <property type="entry name" value="Gp5_trimer_C"/>
    <property type="match status" value="1"/>
</dbReference>
<dbReference type="Pfam" id="PF04717">
    <property type="entry name" value="Phage_base_V"/>
    <property type="match status" value="1"/>
</dbReference>
<dbReference type="Pfam" id="PF05954">
    <property type="entry name" value="Phage_GPD"/>
    <property type="match status" value="1"/>
</dbReference>
<dbReference type="SUPFAM" id="SSF69255">
    <property type="entry name" value="gp5 N-terminal domain-like"/>
    <property type="match status" value="1"/>
</dbReference>
<dbReference type="SUPFAM" id="SSF69349">
    <property type="entry name" value="Phage fibre proteins"/>
    <property type="match status" value="1"/>
</dbReference>
<dbReference type="SUPFAM" id="SSF69279">
    <property type="entry name" value="Phage tail proteins"/>
    <property type="match status" value="2"/>
</dbReference>
<keyword id="KW-1185">Reference proteome</keyword>
<keyword id="KW-0964">Secreted</keyword>
<gene>
    <name evidence="2" type="primary">vgrG4b</name>
    <name type="ordered locus">PA3486</name>
</gene>
<proteinExistence type="inferred from homology"/>
<name>VGR4B_PSEAE</name>
<organism>
    <name type="scientific">Pseudomonas aeruginosa (strain ATCC 15692 / DSM 22644 / CIP 104116 / JCM 14847 / LMG 12228 / 1C / PRS 101 / PAO1)</name>
    <dbReference type="NCBI Taxonomy" id="208964"/>
    <lineage>
        <taxon>Bacteria</taxon>
        <taxon>Pseudomonadati</taxon>
        <taxon>Pseudomonadota</taxon>
        <taxon>Gammaproteobacteria</taxon>
        <taxon>Pseudomonadales</taxon>
        <taxon>Pseudomonadaceae</taxon>
        <taxon>Pseudomonas</taxon>
    </lineage>
</organism>
<feature type="chain" id="PRO_0000448916" description="Type VI secretion system spike protein VgrG4b">
    <location>
        <begin position="1"/>
        <end position="808"/>
    </location>
</feature>
<accession>Q9HYC3</accession>
<protein>
    <recommendedName>
        <fullName evidence="2">Type VI secretion system spike protein VgrG4b</fullName>
    </recommendedName>
</protein>
<comment type="function">
    <text evidence="1">Part of the H2 type VI secretion system (H2-T6SS) specialized secretion system, which delivers several virulence factors in both prokaryotic and eukaryotic cells during infection. Allows the delivery of the phospholipase effector PldA to target cells where it exerts its toxicity.</text>
</comment>
<comment type="subcellular location">
    <subcellularLocation>
        <location evidence="1">Secreted</location>
    </subcellularLocation>
</comment>
<comment type="disruption phenotype">
    <text evidence="1">Deletion leads to a complete loss of PldA secretion.</text>
</comment>
<comment type="similarity">
    <text evidence="3">Belongs to the VgrG protein family.</text>
</comment>
<sequence length="808" mass="90635">MFNPANQTHFSLSLDGLRHDLQVLEFSGHEGISRPYRFELELVSERAGLDLEALMHRPAFLAFTPQGQGVHGLVYGAAQGDAGKRLTRYRLTLVPHLAYLAQRNNQRIFQHLTVPQIVALILEEHGILADAYRFQLGTRYPEREYCVQYDESDLHFVQRLCAEEGIHFHFRHSAEAHLLVFGDDQTVFPRLGRPTAYVHDSGLVADEPVIKRFSLRLASRTTRTTRRDYDFEKPRLLLEAGNRPAADAPAEPDLEDYDYPGRFVDRQRGKLLSQRALERHRADRRLGEGVSDQPLLVSGHFLEIAEHPRAEWNDLWLLSEVFHEGKQPQVLEENVTSDTSASTDDFQQGYRNRFLATPWEVFFRPPLEHPKPRVLGSQTAVVTGPPGEEIHCDRYGRVRVQFHWDREGQGDDKSSCWLRVASGWAGNGYGGIVIPRVGMEVLVDFLEGDPDQPLVSGCVYHAAHPVPYELPANQTRSVFKSLSSPGGDGYNELRIEDRKGQEQIFVHAQRDWDENIEHDQKIRVGHERHDTVEANSYSEFKAEEHHTVHGERKVELKADDHLTVGDSQHVKLGRAYLARAGREIHLKAGQKMVIEADSELTVKAGGSFIRLDASGIAISGPLARINAGGAPGSGSGIAIKMPLTPGAADADVAGRPLQPANAGLHASDPKQNGEYRFDIRLQDIPGDEGFPLIHTPWRIVQGKEHNLVLEGESDEKGRLVLDDTQQRQLSNACERAPGDVWLVYPGQRIGIRPHREREGWDATRHALGALDFHDTLGGQRAPTPLEHQRGKLDSCCEGDLYSHLLAKD</sequence>